<gene>
    <name evidence="2" type="primary">mutM</name>
    <name evidence="2" type="synonym">fpg</name>
    <name type="ordered locus">Asuc_0016</name>
</gene>
<reference key="1">
    <citation type="journal article" date="2010" name="BMC Genomics">
        <title>A genomic perspective on the potential of Actinobacillus succinogenes for industrial succinate production.</title>
        <authorList>
            <person name="McKinlay J.B."/>
            <person name="Laivenieks M."/>
            <person name="Schindler B.D."/>
            <person name="McKinlay A.A."/>
            <person name="Siddaramappa S."/>
            <person name="Challacombe J.F."/>
            <person name="Lowry S.R."/>
            <person name="Clum A."/>
            <person name="Lapidus A.L."/>
            <person name="Burkhart K.B."/>
            <person name="Harkins V."/>
            <person name="Vieille C."/>
        </authorList>
    </citation>
    <scope>NUCLEOTIDE SEQUENCE [LARGE SCALE GENOMIC DNA]</scope>
    <source>
        <strain>ATCC 55618 / DSM 22257 / CCUG 43843 / 130Z</strain>
    </source>
</reference>
<evidence type="ECO:0000250" key="1"/>
<evidence type="ECO:0000255" key="2">
    <source>
        <dbReference type="HAMAP-Rule" id="MF_00103"/>
    </source>
</evidence>
<protein>
    <recommendedName>
        <fullName evidence="2">Formamidopyrimidine-DNA glycosylase</fullName>
        <shortName evidence="2">Fapy-DNA glycosylase</shortName>
        <ecNumber evidence="2">3.2.2.23</ecNumber>
    </recommendedName>
    <alternativeName>
        <fullName evidence="2">DNA-(apurinic or apyrimidinic site) lyase MutM</fullName>
        <shortName evidence="2">AP lyase MutM</shortName>
        <ecNumber evidence="2">4.2.99.18</ecNumber>
    </alternativeName>
</protein>
<name>FPG_ACTSZ</name>
<comment type="function">
    <text evidence="2">Involved in base excision repair of DNA damaged by oxidation or by mutagenic agents. Acts as a DNA glycosylase that recognizes and removes damaged bases. Has a preference for oxidized purines, such as 7,8-dihydro-8-oxoguanine (8-oxoG). Has AP (apurinic/apyrimidinic) lyase activity and introduces nicks in the DNA strand. Cleaves the DNA backbone by beta-delta elimination to generate a single-strand break at the site of the removed base with both 3'- and 5'-phosphates.</text>
</comment>
<comment type="catalytic activity">
    <reaction evidence="2">
        <text>Hydrolysis of DNA containing ring-opened 7-methylguanine residues, releasing 2,6-diamino-4-hydroxy-5-(N-methyl)formamidopyrimidine.</text>
        <dbReference type="EC" id="3.2.2.23"/>
    </reaction>
</comment>
<comment type="catalytic activity">
    <reaction evidence="2">
        <text>2'-deoxyribonucleotide-(2'-deoxyribose 5'-phosphate)-2'-deoxyribonucleotide-DNA = a 3'-end 2'-deoxyribonucleotide-(2,3-dehydro-2,3-deoxyribose 5'-phosphate)-DNA + a 5'-end 5'-phospho-2'-deoxyribonucleoside-DNA + H(+)</text>
        <dbReference type="Rhea" id="RHEA:66592"/>
        <dbReference type="Rhea" id="RHEA-COMP:13180"/>
        <dbReference type="Rhea" id="RHEA-COMP:16897"/>
        <dbReference type="Rhea" id="RHEA-COMP:17067"/>
        <dbReference type="ChEBI" id="CHEBI:15378"/>
        <dbReference type="ChEBI" id="CHEBI:136412"/>
        <dbReference type="ChEBI" id="CHEBI:157695"/>
        <dbReference type="ChEBI" id="CHEBI:167181"/>
        <dbReference type="EC" id="4.2.99.18"/>
    </reaction>
</comment>
<comment type="cofactor">
    <cofactor evidence="2">
        <name>Zn(2+)</name>
        <dbReference type="ChEBI" id="CHEBI:29105"/>
    </cofactor>
    <text evidence="2">Binds 1 zinc ion per subunit.</text>
</comment>
<comment type="subunit">
    <text evidence="2">Monomer.</text>
</comment>
<comment type="similarity">
    <text evidence="2">Belongs to the FPG family.</text>
</comment>
<accession>A6VKA1</accession>
<keyword id="KW-0227">DNA damage</keyword>
<keyword id="KW-0234">DNA repair</keyword>
<keyword id="KW-0238">DNA-binding</keyword>
<keyword id="KW-0326">Glycosidase</keyword>
<keyword id="KW-0378">Hydrolase</keyword>
<keyword id="KW-0456">Lyase</keyword>
<keyword id="KW-0479">Metal-binding</keyword>
<keyword id="KW-0511">Multifunctional enzyme</keyword>
<keyword id="KW-1185">Reference proteome</keyword>
<keyword id="KW-0862">Zinc</keyword>
<keyword id="KW-0863">Zinc-finger</keyword>
<dbReference type="EC" id="3.2.2.23" evidence="2"/>
<dbReference type="EC" id="4.2.99.18" evidence="2"/>
<dbReference type="EMBL" id="CP000746">
    <property type="protein sequence ID" value="ABR73398.1"/>
    <property type="molecule type" value="Genomic_DNA"/>
</dbReference>
<dbReference type="RefSeq" id="WP_011978674.1">
    <property type="nucleotide sequence ID" value="NC_009655.1"/>
</dbReference>
<dbReference type="SMR" id="A6VKA1"/>
<dbReference type="STRING" id="339671.Asuc_0016"/>
<dbReference type="KEGG" id="asu:Asuc_0016"/>
<dbReference type="eggNOG" id="COG0266">
    <property type="taxonomic scope" value="Bacteria"/>
</dbReference>
<dbReference type="HOGENOM" id="CLU_038423_1_1_6"/>
<dbReference type="OrthoDB" id="9800855at2"/>
<dbReference type="Proteomes" id="UP000001114">
    <property type="component" value="Chromosome"/>
</dbReference>
<dbReference type="GO" id="GO:0034039">
    <property type="term" value="F:8-oxo-7,8-dihydroguanine DNA N-glycosylase activity"/>
    <property type="evidence" value="ECO:0007669"/>
    <property type="project" value="TreeGrafter"/>
</dbReference>
<dbReference type="GO" id="GO:0140078">
    <property type="term" value="F:class I DNA-(apurinic or apyrimidinic site) endonuclease activity"/>
    <property type="evidence" value="ECO:0007669"/>
    <property type="project" value="UniProtKB-EC"/>
</dbReference>
<dbReference type="GO" id="GO:0003684">
    <property type="term" value="F:damaged DNA binding"/>
    <property type="evidence" value="ECO:0007669"/>
    <property type="project" value="InterPro"/>
</dbReference>
<dbReference type="GO" id="GO:0008270">
    <property type="term" value="F:zinc ion binding"/>
    <property type="evidence" value="ECO:0007669"/>
    <property type="project" value="UniProtKB-UniRule"/>
</dbReference>
<dbReference type="GO" id="GO:0006284">
    <property type="term" value="P:base-excision repair"/>
    <property type="evidence" value="ECO:0007669"/>
    <property type="project" value="InterPro"/>
</dbReference>
<dbReference type="CDD" id="cd08966">
    <property type="entry name" value="EcFpg-like_N"/>
    <property type="match status" value="1"/>
</dbReference>
<dbReference type="FunFam" id="1.10.8.50:FF:000003">
    <property type="entry name" value="Formamidopyrimidine-DNA glycosylase"/>
    <property type="match status" value="1"/>
</dbReference>
<dbReference type="FunFam" id="3.20.190.10:FF:000001">
    <property type="entry name" value="Formamidopyrimidine-DNA glycosylase"/>
    <property type="match status" value="1"/>
</dbReference>
<dbReference type="Gene3D" id="1.10.8.50">
    <property type="match status" value="1"/>
</dbReference>
<dbReference type="Gene3D" id="3.20.190.10">
    <property type="entry name" value="MutM-like, N-terminal"/>
    <property type="match status" value="1"/>
</dbReference>
<dbReference type="HAMAP" id="MF_00103">
    <property type="entry name" value="Fapy_DNA_glycosyl"/>
    <property type="match status" value="1"/>
</dbReference>
<dbReference type="InterPro" id="IPR015886">
    <property type="entry name" value="DNA_glyclase/AP_lyase_DNA-bd"/>
</dbReference>
<dbReference type="InterPro" id="IPR020629">
    <property type="entry name" value="Formamido-pyr_DNA_Glyclase"/>
</dbReference>
<dbReference type="InterPro" id="IPR012319">
    <property type="entry name" value="FPG_cat"/>
</dbReference>
<dbReference type="InterPro" id="IPR035937">
    <property type="entry name" value="MutM-like_N-ter"/>
</dbReference>
<dbReference type="InterPro" id="IPR010979">
    <property type="entry name" value="Ribosomal_uS13-like_H2TH"/>
</dbReference>
<dbReference type="InterPro" id="IPR000214">
    <property type="entry name" value="Znf_DNA_glyclase/AP_lyase"/>
</dbReference>
<dbReference type="InterPro" id="IPR010663">
    <property type="entry name" value="Znf_FPG/IleRS"/>
</dbReference>
<dbReference type="NCBIfam" id="TIGR00577">
    <property type="entry name" value="fpg"/>
    <property type="match status" value="1"/>
</dbReference>
<dbReference type="NCBIfam" id="NF002211">
    <property type="entry name" value="PRK01103.1"/>
    <property type="match status" value="1"/>
</dbReference>
<dbReference type="PANTHER" id="PTHR22993">
    <property type="entry name" value="FORMAMIDOPYRIMIDINE-DNA GLYCOSYLASE"/>
    <property type="match status" value="1"/>
</dbReference>
<dbReference type="PANTHER" id="PTHR22993:SF9">
    <property type="entry name" value="FORMAMIDOPYRIMIDINE-DNA GLYCOSYLASE"/>
    <property type="match status" value="1"/>
</dbReference>
<dbReference type="Pfam" id="PF01149">
    <property type="entry name" value="Fapy_DNA_glyco"/>
    <property type="match status" value="1"/>
</dbReference>
<dbReference type="Pfam" id="PF06831">
    <property type="entry name" value="H2TH"/>
    <property type="match status" value="1"/>
</dbReference>
<dbReference type="Pfam" id="PF06827">
    <property type="entry name" value="zf-FPG_IleRS"/>
    <property type="match status" value="1"/>
</dbReference>
<dbReference type="SMART" id="SM00898">
    <property type="entry name" value="Fapy_DNA_glyco"/>
    <property type="match status" value="1"/>
</dbReference>
<dbReference type="SMART" id="SM01232">
    <property type="entry name" value="H2TH"/>
    <property type="match status" value="1"/>
</dbReference>
<dbReference type="SUPFAM" id="SSF57716">
    <property type="entry name" value="Glucocorticoid receptor-like (DNA-binding domain)"/>
    <property type="match status" value="1"/>
</dbReference>
<dbReference type="SUPFAM" id="SSF81624">
    <property type="entry name" value="N-terminal domain of MutM-like DNA repair proteins"/>
    <property type="match status" value="1"/>
</dbReference>
<dbReference type="SUPFAM" id="SSF46946">
    <property type="entry name" value="S13-like H2TH domain"/>
    <property type="match status" value="1"/>
</dbReference>
<dbReference type="PROSITE" id="PS51068">
    <property type="entry name" value="FPG_CAT"/>
    <property type="match status" value="1"/>
</dbReference>
<dbReference type="PROSITE" id="PS51066">
    <property type="entry name" value="ZF_FPG_2"/>
    <property type="match status" value="1"/>
</dbReference>
<sequence>MPELPEVETAKNGITPYLDGFYIEKIIVRQPKLRWEVSPELSQISHQKVTALSRRAKYLIIHTAQGYIIGHLGMSGAVRIVSPDSPVNKHDHLDIVMNNGKIMRYNDPRRFGAWFWTENLDEFPLFAKLGPEPLSGEFNSDYLFKKSRKKPTAVKSFIMNNAVVVGIGNIYANEVLFQCGLHPEKPAGKITKTQAALLTETIKKELTRAIAQGGTTLKDFLQPDGKPGYFVQELQIYGKKGCPCPKCGQKIESFTVGQRNSYVCLHCQKK</sequence>
<feature type="initiator methionine" description="Removed" evidence="1">
    <location>
        <position position="1"/>
    </location>
</feature>
<feature type="chain" id="PRO_1000071306" description="Formamidopyrimidine-DNA glycosylase">
    <location>
        <begin position="2"/>
        <end position="270"/>
    </location>
</feature>
<feature type="zinc finger region" description="FPG-type" evidence="2">
    <location>
        <begin position="235"/>
        <end position="269"/>
    </location>
</feature>
<feature type="active site" description="Schiff-base intermediate with DNA" evidence="2">
    <location>
        <position position="2"/>
    </location>
</feature>
<feature type="active site" description="Proton donor" evidence="2">
    <location>
        <position position="3"/>
    </location>
</feature>
<feature type="active site" description="Proton donor; for beta-elimination activity" evidence="2">
    <location>
        <position position="57"/>
    </location>
</feature>
<feature type="active site" description="Proton donor; for delta-elimination activity" evidence="2">
    <location>
        <position position="259"/>
    </location>
</feature>
<feature type="binding site" evidence="2">
    <location>
        <position position="90"/>
    </location>
    <ligand>
        <name>DNA</name>
        <dbReference type="ChEBI" id="CHEBI:16991"/>
    </ligand>
</feature>
<feature type="binding site" evidence="2">
    <location>
        <position position="109"/>
    </location>
    <ligand>
        <name>DNA</name>
        <dbReference type="ChEBI" id="CHEBI:16991"/>
    </ligand>
</feature>
<feature type="binding site" evidence="2">
    <location>
        <position position="150"/>
    </location>
    <ligand>
        <name>DNA</name>
        <dbReference type="ChEBI" id="CHEBI:16991"/>
    </ligand>
</feature>
<organism>
    <name type="scientific">Actinobacillus succinogenes (strain ATCC 55618 / DSM 22257 / CCUG 43843 / 130Z)</name>
    <dbReference type="NCBI Taxonomy" id="339671"/>
    <lineage>
        <taxon>Bacteria</taxon>
        <taxon>Pseudomonadati</taxon>
        <taxon>Pseudomonadota</taxon>
        <taxon>Gammaproteobacteria</taxon>
        <taxon>Pasteurellales</taxon>
        <taxon>Pasteurellaceae</taxon>
        <taxon>Actinobacillus</taxon>
    </lineage>
</organism>
<proteinExistence type="inferred from homology"/>